<feature type="chain" id="PRO_0000300562" description="p-hydroxybenzoic acid efflux pump subunit AaeB">
    <location>
        <begin position="1"/>
        <end position="655"/>
    </location>
</feature>
<feature type="transmembrane region" description="Helical" evidence="1">
    <location>
        <begin position="13"/>
        <end position="33"/>
    </location>
</feature>
<feature type="transmembrane region" description="Helical" evidence="1">
    <location>
        <begin position="38"/>
        <end position="58"/>
    </location>
</feature>
<feature type="transmembrane region" description="Helical" evidence="1">
    <location>
        <begin position="69"/>
        <end position="89"/>
    </location>
</feature>
<feature type="transmembrane region" description="Helical" evidence="1">
    <location>
        <begin position="93"/>
        <end position="113"/>
    </location>
</feature>
<feature type="transmembrane region" description="Helical" evidence="1">
    <location>
        <begin position="121"/>
        <end position="141"/>
    </location>
</feature>
<feature type="transmembrane region" description="Helical" evidence="1">
    <location>
        <begin position="152"/>
        <end position="172"/>
    </location>
</feature>
<feature type="transmembrane region" description="Helical" evidence="1">
    <location>
        <begin position="370"/>
        <end position="390"/>
    </location>
</feature>
<feature type="transmembrane region" description="Helical" evidence="1">
    <location>
        <begin position="407"/>
        <end position="427"/>
    </location>
</feature>
<feature type="transmembrane region" description="Helical" evidence="1">
    <location>
        <begin position="431"/>
        <end position="451"/>
    </location>
</feature>
<feature type="transmembrane region" description="Helical" evidence="1">
    <location>
        <begin position="459"/>
        <end position="479"/>
    </location>
</feature>
<feature type="transmembrane region" description="Helical" evidence="1">
    <location>
        <begin position="482"/>
        <end position="502"/>
    </location>
</feature>
<name>AAEB_ECOUT</name>
<proteinExistence type="inferred from homology"/>
<evidence type="ECO:0000255" key="1">
    <source>
        <dbReference type="HAMAP-Rule" id="MF_01545"/>
    </source>
</evidence>
<dbReference type="EMBL" id="CP000243">
    <property type="protein sequence ID" value="ABE09115.1"/>
    <property type="molecule type" value="Genomic_DNA"/>
</dbReference>
<dbReference type="RefSeq" id="WP_000510964.1">
    <property type="nucleotide sequence ID" value="NZ_CP064825.1"/>
</dbReference>
<dbReference type="SMR" id="Q1R699"/>
<dbReference type="KEGG" id="eci:UTI89_C3671"/>
<dbReference type="HOGENOM" id="CLU_027647_0_0_6"/>
<dbReference type="Proteomes" id="UP000001952">
    <property type="component" value="Chromosome"/>
</dbReference>
<dbReference type="GO" id="GO:0005886">
    <property type="term" value="C:plasma membrane"/>
    <property type="evidence" value="ECO:0007669"/>
    <property type="project" value="UniProtKB-SubCell"/>
</dbReference>
<dbReference type="GO" id="GO:0022857">
    <property type="term" value="F:transmembrane transporter activity"/>
    <property type="evidence" value="ECO:0007669"/>
    <property type="project" value="UniProtKB-UniRule"/>
</dbReference>
<dbReference type="GO" id="GO:0046942">
    <property type="term" value="P:carboxylic acid transport"/>
    <property type="evidence" value="ECO:0007669"/>
    <property type="project" value="InterPro"/>
</dbReference>
<dbReference type="HAMAP" id="MF_01545">
    <property type="entry name" value="AaeB"/>
    <property type="match status" value="1"/>
</dbReference>
<dbReference type="InterPro" id="IPR006726">
    <property type="entry name" value="PHBA_efflux_AaeB/fusaric-R"/>
</dbReference>
<dbReference type="InterPro" id="IPR023706">
    <property type="entry name" value="PHBA_efflux_pump_AaeB"/>
</dbReference>
<dbReference type="NCBIfam" id="NF007916">
    <property type="entry name" value="PRK10631.1"/>
    <property type="match status" value="1"/>
</dbReference>
<dbReference type="PANTHER" id="PTHR30509:SF9">
    <property type="entry name" value="MULTIDRUG RESISTANCE PROTEIN MDTO"/>
    <property type="match status" value="1"/>
</dbReference>
<dbReference type="PANTHER" id="PTHR30509">
    <property type="entry name" value="P-HYDROXYBENZOIC ACID EFFLUX PUMP SUBUNIT-RELATED"/>
    <property type="match status" value="1"/>
</dbReference>
<dbReference type="Pfam" id="PF04632">
    <property type="entry name" value="FUSC"/>
    <property type="match status" value="1"/>
</dbReference>
<keyword id="KW-0997">Cell inner membrane</keyword>
<keyword id="KW-1003">Cell membrane</keyword>
<keyword id="KW-0472">Membrane</keyword>
<keyword id="KW-0812">Transmembrane</keyword>
<keyword id="KW-1133">Transmembrane helix</keyword>
<keyword id="KW-0813">Transport</keyword>
<gene>
    <name evidence="1" type="primary">aaeB</name>
    <name type="ordered locus">UTI89_C3671</name>
</gene>
<protein>
    <recommendedName>
        <fullName evidence="1">p-hydroxybenzoic acid efflux pump subunit AaeB</fullName>
        <shortName evidence="1">pHBA efflux pump protein B</shortName>
    </recommendedName>
</protein>
<sequence length="655" mass="73641">MGIFSIANQHIRFAVKLATAIVLALFVGFHFQLETPRWAVLTAAIVAAGPAFAAGGEPYSGAIRYRGFLRIIGTFIGCIAGLVIIIAMIRAPLLMILVCCIWAGFCTWISSLVRIENSYAWGLAGYTALIIVITIQPEPLLTPQFAVERCSEIVIGIVCAIMADLLFSPRSIKQEVDRELESLLVAQYQLMQLCIKHGDGEVVDKAWGDLVRRTTALQGMRSNLNMESSRWARANRRLKAINTLSLTLITQSCETYLIQNTRPELITDTFREFFDTPVETAQDVHKQLKRLRRVIAWTGERETPVTIYSWVAAATRYQLLKRGVISNTKINATEEEILQGEPEVKVESAERHHAMVNFWRTTLSCILGTLFWLWTGWTSGSGAMVMIAVVTSLAMRLPNPRMVAIDFIYGTLAALPLGLLYFLVIIPNTQQSMLLLCISLAVLGFFLGIEVQKRRLGSMGALASTINIIVLDNPMTFHFSQFLDSALGQIVGCVLAFTVILLVRDKSRDRTGRVLLNQFVSAAVSAMTTNVARRKENHLPALYQQLFLLMNKFPGDLPKFRLALTMIIAHQRLRDAPIPVNEDLSAFHRQMRRTADHVISARSDDKRRRYFGQLLEELEIYQEKLRIWQAPPQVTEPVHRLTGMLHKYQHALTDS</sequence>
<reference key="1">
    <citation type="journal article" date="2006" name="Proc. Natl. Acad. Sci. U.S.A.">
        <title>Identification of genes subject to positive selection in uropathogenic strains of Escherichia coli: a comparative genomics approach.</title>
        <authorList>
            <person name="Chen S.L."/>
            <person name="Hung C.-S."/>
            <person name="Xu J."/>
            <person name="Reigstad C.S."/>
            <person name="Magrini V."/>
            <person name="Sabo A."/>
            <person name="Blasiar D."/>
            <person name="Bieri T."/>
            <person name="Meyer R.R."/>
            <person name="Ozersky P."/>
            <person name="Armstrong J.R."/>
            <person name="Fulton R.S."/>
            <person name="Latreille J.P."/>
            <person name="Spieth J."/>
            <person name="Hooton T.M."/>
            <person name="Mardis E.R."/>
            <person name="Hultgren S.J."/>
            <person name="Gordon J.I."/>
        </authorList>
    </citation>
    <scope>NUCLEOTIDE SEQUENCE [LARGE SCALE GENOMIC DNA]</scope>
    <source>
        <strain>UTI89 / UPEC</strain>
    </source>
</reference>
<comment type="function">
    <text evidence="1">Forms an efflux pump with AaeA. Could function as a metabolic relief valve, allowing to eliminate certain compounds when they accumulate to high levels in the cell.</text>
</comment>
<comment type="subcellular location">
    <subcellularLocation>
        <location evidence="1">Cell inner membrane</location>
        <topology evidence="1">Multi-pass membrane protein</topology>
    </subcellularLocation>
</comment>
<comment type="induction">
    <text evidence="1">Positively coregulated with aaeA and aaeX by AaeR.</text>
</comment>
<comment type="similarity">
    <text evidence="1">Belongs to the aromatic acid exporter ArAE (TC 2.A.85) family.</text>
</comment>
<organism>
    <name type="scientific">Escherichia coli (strain UTI89 / UPEC)</name>
    <dbReference type="NCBI Taxonomy" id="364106"/>
    <lineage>
        <taxon>Bacteria</taxon>
        <taxon>Pseudomonadati</taxon>
        <taxon>Pseudomonadota</taxon>
        <taxon>Gammaproteobacteria</taxon>
        <taxon>Enterobacterales</taxon>
        <taxon>Enterobacteriaceae</taxon>
        <taxon>Escherichia</taxon>
    </lineage>
</organism>
<accession>Q1R699</accession>